<gene>
    <name evidence="1" type="primary">queE</name>
    <name type="ordered locus">Z4089</name>
    <name type="ordered locus">ECs3633</name>
</gene>
<name>QUEE_ECO57</name>
<reference key="1">
    <citation type="journal article" date="2001" name="Nature">
        <title>Genome sequence of enterohaemorrhagic Escherichia coli O157:H7.</title>
        <authorList>
            <person name="Perna N.T."/>
            <person name="Plunkett G. III"/>
            <person name="Burland V."/>
            <person name="Mau B."/>
            <person name="Glasner J.D."/>
            <person name="Rose D.J."/>
            <person name="Mayhew G.F."/>
            <person name="Evans P.S."/>
            <person name="Gregor J."/>
            <person name="Kirkpatrick H.A."/>
            <person name="Posfai G."/>
            <person name="Hackett J."/>
            <person name="Klink S."/>
            <person name="Boutin A."/>
            <person name="Shao Y."/>
            <person name="Miller L."/>
            <person name="Grotbeck E.J."/>
            <person name="Davis N.W."/>
            <person name="Lim A."/>
            <person name="Dimalanta E.T."/>
            <person name="Potamousis K."/>
            <person name="Apodaca J."/>
            <person name="Anantharaman T.S."/>
            <person name="Lin J."/>
            <person name="Yen G."/>
            <person name="Schwartz D.C."/>
            <person name="Welch R.A."/>
            <person name="Blattner F.R."/>
        </authorList>
    </citation>
    <scope>NUCLEOTIDE SEQUENCE [LARGE SCALE GENOMIC DNA]</scope>
    <source>
        <strain>O157:H7 / EDL933 / ATCC 700927 / EHEC</strain>
    </source>
</reference>
<reference key="2">
    <citation type="journal article" date="2001" name="DNA Res.">
        <title>Complete genome sequence of enterohemorrhagic Escherichia coli O157:H7 and genomic comparison with a laboratory strain K-12.</title>
        <authorList>
            <person name="Hayashi T."/>
            <person name="Makino K."/>
            <person name="Ohnishi M."/>
            <person name="Kurokawa K."/>
            <person name="Ishii K."/>
            <person name="Yokoyama K."/>
            <person name="Han C.-G."/>
            <person name="Ohtsubo E."/>
            <person name="Nakayama K."/>
            <person name="Murata T."/>
            <person name="Tanaka M."/>
            <person name="Tobe T."/>
            <person name="Iida T."/>
            <person name="Takami H."/>
            <person name="Honda T."/>
            <person name="Sasakawa C."/>
            <person name="Ogasawara N."/>
            <person name="Yasunaga T."/>
            <person name="Kuhara S."/>
            <person name="Shiba T."/>
            <person name="Hattori M."/>
            <person name="Shinagawa H."/>
        </authorList>
    </citation>
    <scope>NUCLEOTIDE SEQUENCE [LARGE SCALE GENOMIC DNA]</scope>
    <source>
        <strain>O157:H7 / Sakai / RIMD 0509952 / EHEC</strain>
    </source>
</reference>
<evidence type="ECO:0000255" key="1">
    <source>
        <dbReference type="HAMAP-Rule" id="MF_00917"/>
    </source>
</evidence>
<evidence type="ECO:0000255" key="2">
    <source>
        <dbReference type="PROSITE-ProRule" id="PRU01266"/>
    </source>
</evidence>
<comment type="function">
    <text evidence="1">Catalyzes the complex heterocyclic radical-mediated conversion of 6-carboxy-5,6,7,8-tetrahydropterin (CPH4) to 7-carboxy-7-deazaguanine (CDG), a step common to the biosynthetic pathways of all 7-deazapurine-containing compounds.</text>
</comment>
<comment type="catalytic activity">
    <reaction evidence="1">
        <text>6-carboxy-5,6,7,8-tetrahydropterin + H(+) = 7-carboxy-7-deazaguanine + NH4(+)</text>
        <dbReference type="Rhea" id="RHEA:27974"/>
        <dbReference type="ChEBI" id="CHEBI:15378"/>
        <dbReference type="ChEBI" id="CHEBI:28938"/>
        <dbReference type="ChEBI" id="CHEBI:61032"/>
        <dbReference type="ChEBI" id="CHEBI:61036"/>
        <dbReference type="EC" id="4.3.99.3"/>
    </reaction>
</comment>
<comment type="cofactor">
    <cofactor evidence="1">
        <name>[4Fe-4S] cluster</name>
        <dbReference type="ChEBI" id="CHEBI:49883"/>
    </cofactor>
    <text evidence="1">Binds 1 [4Fe-4S] cluster. The cluster is coordinated with 3 cysteines and an exchangeable S-adenosyl-L-methionine.</text>
</comment>
<comment type="cofactor">
    <cofactor evidence="1">
        <name>S-adenosyl-L-methionine</name>
        <dbReference type="ChEBI" id="CHEBI:59789"/>
    </cofactor>
    <text evidence="1">Binds 1 S-adenosyl-L-methionine per subunit.</text>
</comment>
<comment type="cofactor">
    <cofactor evidence="1">
        <name>Mg(2+)</name>
        <dbReference type="ChEBI" id="CHEBI:18420"/>
    </cofactor>
</comment>
<comment type="pathway">
    <text evidence="1">Purine metabolism; 7-cyano-7-deazaguanine biosynthesis.</text>
</comment>
<comment type="subunit">
    <text evidence="1">Homodimer.</text>
</comment>
<comment type="similarity">
    <text evidence="1">Belongs to the radical SAM superfamily. 7-carboxy-7-deazaguanine synthase family.</text>
</comment>
<keyword id="KW-0004">4Fe-4S</keyword>
<keyword id="KW-0408">Iron</keyword>
<keyword id="KW-0411">Iron-sulfur</keyword>
<keyword id="KW-0456">Lyase</keyword>
<keyword id="KW-0460">Magnesium</keyword>
<keyword id="KW-0479">Metal-binding</keyword>
<keyword id="KW-0671">Queuosine biosynthesis</keyword>
<keyword id="KW-1185">Reference proteome</keyword>
<keyword id="KW-0949">S-adenosyl-L-methionine</keyword>
<proteinExistence type="inferred from homology"/>
<sequence length="223" mass="25030">MQYPINEMFQTLQGEGYFTGVPAIFIRLQGCPVGCAWCDTKHTWEKLEDREVSLFSILAKTKESDKWGAASSEDLLAVIGRQGYTARHVVITGGEPCIHDLLPLTDLLEKNGFSCQIETSGTHEVRCTPNTWVTVSPKLNMRGGYEVLSQALERANEIKHPVGRVRDIEALDELLATLTDDKPRVIALQPISQKDDATRLCIETCIARNWRLSMQTHKYLNIA</sequence>
<accession>P64555</accession>
<accession>P55139</accession>
<organism>
    <name type="scientific">Escherichia coli O157:H7</name>
    <dbReference type="NCBI Taxonomy" id="83334"/>
    <lineage>
        <taxon>Bacteria</taxon>
        <taxon>Pseudomonadati</taxon>
        <taxon>Pseudomonadota</taxon>
        <taxon>Gammaproteobacteria</taxon>
        <taxon>Enterobacterales</taxon>
        <taxon>Enterobacteriaceae</taxon>
        <taxon>Escherichia</taxon>
    </lineage>
</organism>
<dbReference type="EC" id="4.3.99.3" evidence="1"/>
<dbReference type="EMBL" id="AE005174">
    <property type="protein sequence ID" value="AAG57887.1"/>
    <property type="molecule type" value="Genomic_DNA"/>
</dbReference>
<dbReference type="EMBL" id="BA000007">
    <property type="protein sequence ID" value="BAB37056.1"/>
    <property type="molecule type" value="Genomic_DNA"/>
</dbReference>
<dbReference type="PIR" id="A91083">
    <property type="entry name" value="A91083"/>
</dbReference>
<dbReference type="RefSeq" id="NP_311660.1">
    <property type="nucleotide sequence ID" value="NC_002695.1"/>
</dbReference>
<dbReference type="RefSeq" id="WP_001199973.1">
    <property type="nucleotide sequence ID" value="NZ_VOAI01000003.1"/>
</dbReference>
<dbReference type="SMR" id="P64555"/>
<dbReference type="STRING" id="155864.Z4089"/>
<dbReference type="GeneID" id="89517576"/>
<dbReference type="GeneID" id="912281"/>
<dbReference type="KEGG" id="ece:Z4089"/>
<dbReference type="KEGG" id="ecs:ECs_3633"/>
<dbReference type="PATRIC" id="fig|386585.9.peg.3797"/>
<dbReference type="eggNOG" id="COG0602">
    <property type="taxonomic scope" value="Bacteria"/>
</dbReference>
<dbReference type="HOGENOM" id="CLU_066739_3_0_6"/>
<dbReference type="OMA" id="PCIHDLT"/>
<dbReference type="UniPathway" id="UPA00391"/>
<dbReference type="Proteomes" id="UP000000558">
    <property type="component" value="Chromosome"/>
</dbReference>
<dbReference type="Proteomes" id="UP000002519">
    <property type="component" value="Chromosome"/>
</dbReference>
<dbReference type="GO" id="GO:0051539">
    <property type="term" value="F:4 iron, 4 sulfur cluster binding"/>
    <property type="evidence" value="ECO:0007669"/>
    <property type="project" value="UniProtKB-UniRule"/>
</dbReference>
<dbReference type="GO" id="GO:0016840">
    <property type="term" value="F:carbon-nitrogen lyase activity"/>
    <property type="evidence" value="ECO:0007669"/>
    <property type="project" value="UniProtKB-UniRule"/>
</dbReference>
<dbReference type="GO" id="GO:0000287">
    <property type="term" value="F:magnesium ion binding"/>
    <property type="evidence" value="ECO:0007669"/>
    <property type="project" value="UniProtKB-UniRule"/>
</dbReference>
<dbReference type="GO" id="GO:1904047">
    <property type="term" value="F:S-adenosyl-L-methionine binding"/>
    <property type="evidence" value="ECO:0007669"/>
    <property type="project" value="UniProtKB-UniRule"/>
</dbReference>
<dbReference type="GO" id="GO:0008616">
    <property type="term" value="P:queuosine biosynthetic process"/>
    <property type="evidence" value="ECO:0007669"/>
    <property type="project" value="UniProtKB-UniRule"/>
</dbReference>
<dbReference type="FunFam" id="3.20.20.70:FF:000085">
    <property type="entry name" value="7-carboxy-7-deazaguanine synthase"/>
    <property type="match status" value="1"/>
</dbReference>
<dbReference type="Gene3D" id="3.20.20.70">
    <property type="entry name" value="Aldolase class I"/>
    <property type="match status" value="1"/>
</dbReference>
<dbReference type="HAMAP" id="MF_00917">
    <property type="entry name" value="QueE"/>
    <property type="match status" value="1"/>
</dbReference>
<dbReference type="InterPro" id="IPR024924">
    <property type="entry name" value="7-CO-7-deazaguanine_synth-like"/>
</dbReference>
<dbReference type="InterPro" id="IPR013785">
    <property type="entry name" value="Aldolase_TIM"/>
</dbReference>
<dbReference type="InterPro" id="IPR007197">
    <property type="entry name" value="rSAM"/>
</dbReference>
<dbReference type="InterPro" id="IPR027609">
    <property type="entry name" value="rSAM_QueE_proteobac"/>
</dbReference>
<dbReference type="NCBIfam" id="TIGR04322">
    <property type="entry name" value="rSAM_QueE_Ecoli"/>
    <property type="match status" value="1"/>
</dbReference>
<dbReference type="PANTHER" id="PTHR42836">
    <property type="entry name" value="7-CARBOXY-7-DEAZAGUANINE SYNTHASE"/>
    <property type="match status" value="1"/>
</dbReference>
<dbReference type="PANTHER" id="PTHR42836:SF1">
    <property type="entry name" value="7-CARBOXY-7-DEAZAGUANINE SYNTHASE"/>
    <property type="match status" value="1"/>
</dbReference>
<dbReference type="PIRSF" id="PIRSF000370">
    <property type="entry name" value="QueE"/>
    <property type="match status" value="1"/>
</dbReference>
<dbReference type="SFLD" id="SFLDS00029">
    <property type="entry name" value="Radical_SAM"/>
    <property type="match status" value="1"/>
</dbReference>
<dbReference type="SUPFAM" id="SSF102114">
    <property type="entry name" value="Radical SAM enzymes"/>
    <property type="match status" value="1"/>
</dbReference>
<dbReference type="PROSITE" id="PS51918">
    <property type="entry name" value="RADICAL_SAM"/>
    <property type="match status" value="1"/>
</dbReference>
<protein>
    <recommendedName>
        <fullName evidence="1">7-carboxy-7-deazaguanine synthase</fullName>
        <shortName evidence="1">CDG synthase</shortName>
        <ecNumber evidence="1">4.3.99.3</ecNumber>
    </recommendedName>
    <alternativeName>
        <fullName evidence="1">Queuosine biosynthesis protein QueE</fullName>
    </alternativeName>
</protein>
<feature type="chain" id="PRO_0000169317" description="7-carboxy-7-deazaguanine synthase">
    <location>
        <begin position="1"/>
        <end position="223"/>
    </location>
</feature>
<feature type="domain" description="Radical SAM core" evidence="2">
    <location>
        <begin position="18"/>
        <end position="223"/>
    </location>
</feature>
<feature type="binding site" evidence="1">
    <location>
        <begin position="12"/>
        <end position="14"/>
    </location>
    <ligand>
        <name>substrate</name>
    </ligand>
</feature>
<feature type="binding site" evidence="1">
    <location>
        <position position="27"/>
    </location>
    <ligand>
        <name>substrate</name>
    </ligand>
</feature>
<feature type="binding site" evidence="1">
    <location>
        <position position="31"/>
    </location>
    <ligand>
        <name>[4Fe-4S] cluster</name>
        <dbReference type="ChEBI" id="CHEBI:49883"/>
        <note>4Fe-4S-S-AdoMet</note>
    </ligand>
</feature>
<feature type="binding site" evidence="1">
    <location>
        <position position="35"/>
    </location>
    <ligand>
        <name>[4Fe-4S] cluster</name>
        <dbReference type="ChEBI" id="CHEBI:49883"/>
        <note>4Fe-4S-S-AdoMet</note>
    </ligand>
</feature>
<feature type="binding site" evidence="1">
    <location>
        <position position="38"/>
    </location>
    <ligand>
        <name>[4Fe-4S] cluster</name>
        <dbReference type="ChEBI" id="CHEBI:49883"/>
        <note>4Fe-4S-S-AdoMet</note>
    </ligand>
</feature>
<feature type="binding site" evidence="1">
    <location>
        <position position="40"/>
    </location>
    <ligand>
        <name>Mg(2+)</name>
        <dbReference type="ChEBI" id="CHEBI:18420"/>
    </ligand>
</feature>
<feature type="binding site" evidence="1">
    <location>
        <position position="92"/>
    </location>
    <ligand>
        <name>substrate</name>
    </ligand>
</feature>
<feature type="binding site" evidence="1">
    <location>
        <position position="94"/>
    </location>
    <ligand>
        <name>S-adenosyl-L-methionine</name>
        <dbReference type="ChEBI" id="CHEBI:59789"/>
    </ligand>
</feature>
<feature type="binding site" evidence="1">
    <location>
        <begin position="136"/>
        <end position="138"/>
    </location>
    <ligand>
        <name>S-adenosyl-L-methionine</name>
        <dbReference type="ChEBI" id="CHEBI:59789"/>
    </ligand>
</feature>